<organism>
    <name type="scientific">Rattus rattus</name>
    <name type="common">Black rat</name>
    <dbReference type="NCBI Taxonomy" id="10117"/>
    <lineage>
        <taxon>Eukaryota</taxon>
        <taxon>Metazoa</taxon>
        <taxon>Chordata</taxon>
        <taxon>Craniata</taxon>
        <taxon>Vertebrata</taxon>
        <taxon>Euteleostomi</taxon>
        <taxon>Mammalia</taxon>
        <taxon>Eutheria</taxon>
        <taxon>Euarchontoglires</taxon>
        <taxon>Glires</taxon>
        <taxon>Rodentia</taxon>
        <taxon>Myomorpha</taxon>
        <taxon>Muroidea</taxon>
        <taxon>Muridae</taxon>
        <taxon>Murinae</taxon>
        <taxon>Rattus</taxon>
    </lineage>
</organism>
<reference key="1">
    <citation type="journal article" date="2002" name="J. Mol. Evol.">
        <title>Pancreatic-type ribonuclease 1 gene duplications in rat species.</title>
        <authorList>
            <person name="Dubois J.-Y.F."/>
            <person name="Jekel P.A."/>
            <person name="Mulder P.P.M.F.A."/>
            <person name="Bussink A.P."/>
            <person name="Catzeflis F.M."/>
            <person name="Carsana A."/>
            <person name="Beintema J.J."/>
        </authorList>
    </citation>
    <scope>NUCLEOTIDE SEQUENCE [GENOMIC DNA]</scope>
</reference>
<protein>
    <recommendedName>
        <fullName>Ribonuclease pancreatic gamma-type</fullName>
        <ecNumber>4.6.1.18</ecNumber>
    </recommendedName>
    <alternativeName>
        <fullName>RNase 1 gamma</fullName>
    </alternativeName>
</protein>
<dbReference type="EC" id="4.6.1.18"/>
<dbReference type="EMBL" id="AJ315461">
    <property type="protein sequence ID" value="CAC86442.1"/>
    <property type="molecule type" value="Genomic_DNA"/>
</dbReference>
<dbReference type="SMR" id="Q8VD87"/>
<dbReference type="GO" id="GO:0005576">
    <property type="term" value="C:extracellular region"/>
    <property type="evidence" value="ECO:0007669"/>
    <property type="project" value="UniProtKB-SubCell"/>
</dbReference>
<dbReference type="GO" id="GO:0016829">
    <property type="term" value="F:lyase activity"/>
    <property type="evidence" value="ECO:0007669"/>
    <property type="project" value="UniProtKB-KW"/>
</dbReference>
<dbReference type="GO" id="GO:0003676">
    <property type="term" value="F:nucleic acid binding"/>
    <property type="evidence" value="ECO:0007669"/>
    <property type="project" value="InterPro"/>
</dbReference>
<dbReference type="GO" id="GO:0004522">
    <property type="term" value="F:ribonuclease A activity"/>
    <property type="evidence" value="ECO:0007669"/>
    <property type="project" value="UniProtKB-EC"/>
</dbReference>
<dbReference type="GO" id="GO:0050830">
    <property type="term" value="P:defense response to Gram-positive bacterium"/>
    <property type="evidence" value="ECO:0007669"/>
    <property type="project" value="TreeGrafter"/>
</dbReference>
<dbReference type="CDD" id="cd06265">
    <property type="entry name" value="RNase_A_canonical"/>
    <property type="match status" value="1"/>
</dbReference>
<dbReference type="FunFam" id="3.10.130.10:FF:000001">
    <property type="entry name" value="Ribonuclease pancreatic"/>
    <property type="match status" value="1"/>
</dbReference>
<dbReference type="Gene3D" id="3.10.130.10">
    <property type="entry name" value="Ribonuclease A-like domain"/>
    <property type="match status" value="1"/>
</dbReference>
<dbReference type="InterPro" id="IPR001427">
    <property type="entry name" value="RNaseA"/>
</dbReference>
<dbReference type="InterPro" id="IPR036816">
    <property type="entry name" value="RNaseA-like_dom_sf"/>
</dbReference>
<dbReference type="InterPro" id="IPR023411">
    <property type="entry name" value="RNaseA_AS"/>
</dbReference>
<dbReference type="InterPro" id="IPR023412">
    <property type="entry name" value="RNaseA_domain"/>
</dbReference>
<dbReference type="PANTHER" id="PTHR11437">
    <property type="entry name" value="RIBONUCLEASE"/>
    <property type="match status" value="1"/>
</dbReference>
<dbReference type="PANTHER" id="PTHR11437:SF24">
    <property type="entry name" value="RIBONUCLEASE PANCREATIC"/>
    <property type="match status" value="1"/>
</dbReference>
<dbReference type="Pfam" id="PF00074">
    <property type="entry name" value="RnaseA"/>
    <property type="match status" value="1"/>
</dbReference>
<dbReference type="PRINTS" id="PR00794">
    <property type="entry name" value="RIBONUCLEASE"/>
</dbReference>
<dbReference type="SMART" id="SM00092">
    <property type="entry name" value="RNAse_Pc"/>
    <property type="match status" value="1"/>
</dbReference>
<dbReference type="SUPFAM" id="SSF54076">
    <property type="entry name" value="RNase A-like"/>
    <property type="match status" value="1"/>
</dbReference>
<dbReference type="PROSITE" id="PS00127">
    <property type="entry name" value="RNASE_PANCREATIC"/>
    <property type="match status" value="1"/>
</dbReference>
<evidence type="ECO:0000250" key="1"/>
<evidence type="ECO:0000305" key="2"/>
<sequence>MGLEKSFLLFSLLVLVLGWVQPSLGVESRETQTQKFQRQHMDEEGHFPSSPTYCNQMMKSRGMTSGSCKPMNTFVHEPLETVQAICSQGQVTCKNGKRNCHKSSSTLRITDCRLKGSSKYPKCDYTTTDSQKHIIIACDVVHLDATV</sequence>
<keyword id="KW-1015">Disulfide bond</keyword>
<keyword id="KW-0255">Endonuclease</keyword>
<keyword id="KW-0378">Hydrolase</keyword>
<keyword id="KW-0456">Lyase</keyword>
<keyword id="KW-0540">Nuclease</keyword>
<keyword id="KW-0964">Secreted</keyword>
<keyword id="KW-0732">Signal</keyword>
<comment type="function">
    <text evidence="1">Endonuclease that catalyzes the cleavage of RNA on the 3' side of pyrimidine nucleotides. Acts on single-stranded and double-stranded RNA (By similarity).</text>
</comment>
<comment type="catalytic activity">
    <reaction>
        <text>an [RNA] containing cytidine + H2O = an [RNA]-3'-cytidine-3'-phosphate + a 5'-hydroxy-ribonucleotide-3'-[RNA].</text>
        <dbReference type="EC" id="4.6.1.18"/>
    </reaction>
</comment>
<comment type="catalytic activity">
    <reaction>
        <text>an [RNA] containing uridine + H2O = an [RNA]-3'-uridine-3'-phosphate + a 5'-hydroxy-ribonucleotide-3'-[RNA].</text>
        <dbReference type="EC" id="4.6.1.18"/>
    </reaction>
</comment>
<comment type="subunit">
    <text evidence="1">Monomer.</text>
</comment>
<comment type="subcellular location">
    <subcellularLocation>
        <location evidence="1">Secreted</location>
    </subcellularLocation>
</comment>
<comment type="similarity">
    <text evidence="2">Belongs to the pancreatic ribonuclease family.</text>
</comment>
<proteinExistence type="inferred from homology"/>
<accession>Q8VD87</accession>
<name>RNS1G_RATRT</name>
<feature type="signal peptide" evidence="1">
    <location>
        <begin position="1"/>
        <end position="25"/>
    </location>
</feature>
<feature type="chain" id="PRO_0000234941" description="Ribonuclease pancreatic gamma-type">
    <location>
        <begin position="26"/>
        <end position="147"/>
    </location>
</feature>
<feature type="active site" description="Proton acceptor" evidence="1">
    <location>
        <position position="40"/>
    </location>
</feature>
<feature type="active site" description="Proton donor" evidence="1">
    <location>
        <position position="142"/>
    </location>
</feature>
<feature type="binding site" evidence="1">
    <location>
        <position position="35"/>
    </location>
    <ligand>
        <name>substrate</name>
    </ligand>
</feature>
<feature type="binding site" evidence="1">
    <location>
        <position position="38"/>
    </location>
    <ligand>
        <name>substrate</name>
    </ligand>
</feature>
<feature type="binding site" evidence="1">
    <location>
        <begin position="69"/>
        <end position="73"/>
    </location>
    <ligand>
        <name>substrate</name>
    </ligand>
</feature>
<feature type="binding site" evidence="1">
    <location>
        <position position="94"/>
    </location>
    <ligand>
        <name>substrate</name>
    </ligand>
</feature>
<feature type="binding site" evidence="1">
    <location>
        <position position="113"/>
    </location>
    <ligand>
        <name>substrate</name>
    </ligand>
</feature>
<feature type="disulfide bond" evidence="1">
    <location>
        <begin position="54"/>
        <end position="112"/>
    </location>
</feature>
<feature type="disulfide bond" evidence="1">
    <location>
        <begin position="68"/>
        <end position="123"/>
    </location>
</feature>
<feature type="disulfide bond" evidence="1">
    <location>
        <begin position="86"/>
        <end position="138"/>
    </location>
</feature>
<feature type="disulfide bond" evidence="1">
    <location>
        <begin position="93"/>
        <end position="100"/>
    </location>
</feature>